<accession>Q8Y489</accession>
<organism>
    <name type="scientific">Listeria monocytogenes serovar 1/2a (strain ATCC BAA-679 / EGD-e)</name>
    <dbReference type="NCBI Taxonomy" id="169963"/>
    <lineage>
        <taxon>Bacteria</taxon>
        <taxon>Bacillati</taxon>
        <taxon>Bacillota</taxon>
        <taxon>Bacilli</taxon>
        <taxon>Bacillales</taxon>
        <taxon>Listeriaceae</taxon>
        <taxon>Listeria</taxon>
    </lineage>
</organism>
<keyword id="KW-0012">Acyltransferase</keyword>
<keyword id="KW-1185">Reference proteome</keyword>
<keyword id="KW-0808">Transferase</keyword>
<sequence>MNIENTLLKQDVWRFIDNTTINPAFDAIQSFATDDTLCRSVGARMAPSTVRGWVHEKTVSLGIQDSKLPDIDKGIAFLQKQGYRVVVRNSGGLAVVLDSGVLNLSMVLPDAERGIAIERGYETMFTLIKDMFVDCNEVIEAKEIEDSYCPGSYDLSIQGKKFAGISQRRMAKGVAVQIYLAIDGDQTTRSELIRDFYTISGKAKQTKYTFPDVNPNVMGSLSDLMKNDISLNGTLVRLFNSLRHYAGDLVSGTLTSEELDLFPAYYERLIARNDKVLT</sequence>
<comment type="function">
    <text evidence="1 4">Catalyzes the amidotransfer (transamidation) of the lipoyl moiety from lipoyl-GcvH to the lipoyl domain of the E2 subunit of lipoate-dependent enzymes. Takes part in a pathway for scavenging of lipoic acid derived from eukaryotic host cells. Cannot use lipoyl-tripeptide (DK(L)A), lipoamide (LD), or free lipoate as substrate.</text>
</comment>
<comment type="catalytic activity">
    <reaction evidence="1 4">
        <text>N(6)-[(R)-lipoyl]-L-lysyl-[glycine-cleavage complex H protein] + L-lysyl-[lipoyl-carrier protein] = L-lysyl-[glycine-cleavage complex H protein] + N(6)-[(R)-lipoyl]-L-lysyl-[lipoyl-carrier protein]</text>
        <dbReference type="Rhea" id="RHEA:16413"/>
        <dbReference type="Rhea" id="RHEA-COMP:10494"/>
        <dbReference type="Rhea" id="RHEA-COMP:10500"/>
        <dbReference type="Rhea" id="RHEA-COMP:10501"/>
        <dbReference type="Rhea" id="RHEA-COMP:10502"/>
        <dbReference type="ChEBI" id="CHEBI:29969"/>
        <dbReference type="ChEBI" id="CHEBI:83099"/>
        <dbReference type="EC" id="2.3.1.200"/>
    </reaction>
</comment>
<comment type="pathway">
    <text evidence="1 4">Protein modification; protein lipoylation via exogenous pathway.</text>
</comment>
<comment type="disruption phenotype">
    <text evidence="3">Strains lacking this gene are attenuated in their ability to grow in bile, but display no growth defect under normal physiological conditions. The reduced tolerance of the mutant strain to acidic bile salts is likely due to a decreased branched fatty acid content of the membrane phospholipids, which results when L.monocytogenes is deficient in lipoic acid.</text>
</comment>
<comment type="miscellaneous">
    <text evidence="5">L.monocytogenes is a natural lipoic acid auxotroph and relies upon exogenous sources of lipoic acid for growth (PubMed:21768091). Thus, this enzyme has not the same activity as its ortholog in B.subtilis which is involved in the lipoate biosynthesis pathway.</text>
</comment>
<comment type="miscellaneous">
    <text evidence="1">The reaction proceeds via a thioester-linked acyl-enzyme intermediate.</text>
</comment>
<comment type="similarity">
    <text evidence="1">Belongs to the octanoyltransferase LipL family.</text>
</comment>
<name>LIPLL_LISMO</name>
<proteinExistence type="evidence at protein level"/>
<feature type="chain" id="PRO_0000424231" description="Lipoyl-[GcvH]:protein N-lipoyltransferase">
    <location>
        <begin position="1"/>
        <end position="278"/>
    </location>
</feature>
<feature type="domain" description="BPL/LPL catalytic" evidence="2">
    <location>
        <begin position="44"/>
        <end position="250"/>
    </location>
</feature>
<feature type="active site" description="Acyl-thioester intermediate" evidence="1">
    <location>
        <position position="149"/>
    </location>
</feature>
<feature type="site" description="Lowers pKa of active site Cys" evidence="1">
    <location>
        <position position="161"/>
    </location>
</feature>
<reference key="1">
    <citation type="journal article" date="2001" name="Science">
        <title>Comparative genomics of Listeria species.</title>
        <authorList>
            <person name="Glaser P."/>
            <person name="Frangeul L."/>
            <person name="Buchrieser C."/>
            <person name="Rusniok C."/>
            <person name="Amend A."/>
            <person name="Baquero F."/>
            <person name="Berche P."/>
            <person name="Bloecker H."/>
            <person name="Brandt P."/>
            <person name="Chakraborty T."/>
            <person name="Charbit A."/>
            <person name="Chetouani F."/>
            <person name="Couve E."/>
            <person name="de Daruvar A."/>
            <person name="Dehoux P."/>
            <person name="Domann E."/>
            <person name="Dominguez-Bernal G."/>
            <person name="Duchaud E."/>
            <person name="Durant L."/>
            <person name="Dussurget O."/>
            <person name="Entian K.-D."/>
            <person name="Fsihi H."/>
            <person name="Garcia-del Portillo F."/>
            <person name="Garrido P."/>
            <person name="Gautier L."/>
            <person name="Goebel W."/>
            <person name="Gomez-Lopez N."/>
            <person name="Hain T."/>
            <person name="Hauf J."/>
            <person name="Jackson D."/>
            <person name="Jones L.-M."/>
            <person name="Kaerst U."/>
            <person name="Kreft J."/>
            <person name="Kuhn M."/>
            <person name="Kunst F."/>
            <person name="Kurapkat G."/>
            <person name="Madueno E."/>
            <person name="Maitournam A."/>
            <person name="Mata Vicente J."/>
            <person name="Ng E."/>
            <person name="Nedjari H."/>
            <person name="Nordsiek G."/>
            <person name="Novella S."/>
            <person name="de Pablos B."/>
            <person name="Perez-Diaz J.-C."/>
            <person name="Purcell R."/>
            <person name="Remmel B."/>
            <person name="Rose M."/>
            <person name="Schlueter T."/>
            <person name="Simoes N."/>
            <person name="Tierrez A."/>
            <person name="Vazquez-Boland J.-A."/>
            <person name="Voss H."/>
            <person name="Wehland J."/>
            <person name="Cossart P."/>
        </authorList>
    </citation>
    <scope>NUCLEOTIDE SEQUENCE [LARGE SCALE GENOMIC DNA]</scope>
    <source>
        <strain>ATCC BAA-679 / EGD-e</strain>
    </source>
</reference>
<reference key="2">
    <citation type="journal article" date="2011" name="Infect. Immun.">
        <title>Investigation of the mechanisms by which Listeria monocytogenes grows in porcine gallbladder bile.</title>
        <authorList>
            <person name="Dowd G.C."/>
            <person name="Joyce S.A."/>
            <person name="Hill C."/>
            <person name="Gahan C.G."/>
        </authorList>
    </citation>
    <scope>DISRUPTION PHENOTYPE</scope>
    <source>
        <strain>ATCC BAA-679 / EGD-e</strain>
    </source>
</reference>
<reference key="3">
    <citation type="journal article" date="2011" name="J. Biol. Chem.">
        <title>A complex lipoate utilization pathway in Listeria monocytogenes.</title>
        <authorList>
            <person name="Christensen Q.H."/>
            <person name="Hagar J.A."/>
            <person name="O'Riordan M.X."/>
            <person name="Cronan J.E."/>
        </authorList>
    </citation>
    <scope>FUNCTION</scope>
    <scope>CATALYTIC ACTIVITY</scope>
    <scope>SUBSTRATE SPECIFICITY</scope>
    <scope>PATHWAY</scope>
    <source>
        <strain>ATCC BAA-679 / EGD-e</strain>
    </source>
</reference>
<dbReference type="EC" id="2.3.1.200" evidence="1"/>
<dbReference type="EMBL" id="AL591983">
    <property type="protein sequence ID" value="CAD00644.1"/>
    <property type="molecule type" value="Genomic_DNA"/>
</dbReference>
<dbReference type="PIR" id="AF1395">
    <property type="entry name" value="AF1395"/>
</dbReference>
<dbReference type="RefSeq" id="NP_466089.1">
    <property type="nucleotide sequence ID" value="NC_003210.1"/>
</dbReference>
<dbReference type="RefSeq" id="WP_009924631.1">
    <property type="nucleotide sequence ID" value="NZ_CP149495.1"/>
</dbReference>
<dbReference type="SMR" id="Q8Y489"/>
<dbReference type="STRING" id="169963.gene:17595277"/>
<dbReference type="PaxDb" id="169963-lmo2566"/>
<dbReference type="EnsemblBacteria" id="CAD00644">
    <property type="protein sequence ID" value="CAD00644"/>
    <property type="gene ID" value="CAD00644"/>
</dbReference>
<dbReference type="GeneID" id="984810"/>
<dbReference type="KEGG" id="lmo:lmo2566"/>
<dbReference type="PATRIC" id="fig|169963.11.peg.2629"/>
<dbReference type="eggNOG" id="COG0095">
    <property type="taxonomic scope" value="Bacteria"/>
</dbReference>
<dbReference type="HOGENOM" id="CLU_067270_0_0_9"/>
<dbReference type="OrthoDB" id="2080934at2"/>
<dbReference type="PhylomeDB" id="Q8Y489"/>
<dbReference type="BioCyc" id="LMON169963:LMO2566-MONOMER"/>
<dbReference type="BioCyc" id="MetaCyc:MONOMER-17112"/>
<dbReference type="UniPathway" id="UPA00537"/>
<dbReference type="Proteomes" id="UP000000817">
    <property type="component" value="Chromosome"/>
</dbReference>
<dbReference type="GO" id="GO:0033819">
    <property type="term" value="F:lipoyl(octanoyl) transferase activity"/>
    <property type="evidence" value="ECO:0007669"/>
    <property type="project" value="InterPro"/>
</dbReference>
<dbReference type="GO" id="GO:0017118">
    <property type="term" value="F:lipoyltransferase activity"/>
    <property type="evidence" value="ECO:0007669"/>
    <property type="project" value="UniProtKB-UniRule"/>
</dbReference>
<dbReference type="GO" id="GO:0009107">
    <property type="term" value="P:lipoate biosynthetic process"/>
    <property type="evidence" value="ECO:0007669"/>
    <property type="project" value="InterPro"/>
</dbReference>
<dbReference type="GO" id="GO:0036211">
    <property type="term" value="P:protein modification process"/>
    <property type="evidence" value="ECO:0007669"/>
    <property type="project" value="InterPro"/>
</dbReference>
<dbReference type="CDD" id="cd16443">
    <property type="entry name" value="LplA"/>
    <property type="match status" value="1"/>
</dbReference>
<dbReference type="Gene3D" id="3.30.930.10">
    <property type="entry name" value="Bira Bifunctional Protein, Domain 2"/>
    <property type="match status" value="1"/>
</dbReference>
<dbReference type="HAMAP" id="MF_02119">
    <property type="entry name" value="LipL"/>
    <property type="match status" value="1"/>
</dbReference>
<dbReference type="InterPro" id="IPR045864">
    <property type="entry name" value="aa-tRNA-synth_II/BPL/LPL"/>
</dbReference>
<dbReference type="InterPro" id="IPR004143">
    <property type="entry name" value="BPL_LPL_catalytic"/>
</dbReference>
<dbReference type="InterPro" id="IPR024897">
    <property type="entry name" value="LipL"/>
</dbReference>
<dbReference type="InterPro" id="IPR050664">
    <property type="entry name" value="Octanoyltrans_LipM/LipL"/>
</dbReference>
<dbReference type="NCBIfam" id="NF047857">
    <property type="entry name" value="LipGcvHLiptaseLipL"/>
    <property type="match status" value="1"/>
</dbReference>
<dbReference type="PANTHER" id="PTHR43679:SF2">
    <property type="entry name" value="OCTANOYL-[GCVH]:PROTEIN N-OCTANOYLTRANSFERASE"/>
    <property type="match status" value="1"/>
</dbReference>
<dbReference type="PANTHER" id="PTHR43679">
    <property type="entry name" value="OCTANOYLTRANSFERASE LIPM-RELATED"/>
    <property type="match status" value="1"/>
</dbReference>
<dbReference type="Pfam" id="PF21948">
    <property type="entry name" value="LplA-B_cat"/>
    <property type="match status" value="1"/>
</dbReference>
<dbReference type="SUPFAM" id="SSF55681">
    <property type="entry name" value="Class II aaRS and biotin synthetases"/>
    <property type="match status" value="1"/>
</dbReference>
<dbReference type="PROSITE" id="PS51733">
    <property type="entry name" value="BPL_LPL_CATALYTIC"/>
    <property type="match status" value="1"/>
</dbReference>
<protein>
    <recommendedName>
        <fullName evidence="1">Lipoyl-[GcvH]:protein N-lipoyltransferase</fullName>
        <ecNumber evidence="1">2.3.1.200</ecNumber>
    </recommendedName>
    <alternativeName>
        <fullName>Lipoyl amidotransferase</fullName>
    </alternativeName>
    <alternativeName>
        <fullName evidence="1">Lipoyl-[GcvH]:E2 amidotransferase</fullName>
    </alternativeName>
</protein>
<gene>
    <name evidence="1" type="primary">lipL</name>
    <name type="ordered locus">lmo2566</name>
</gene>
<evidence type="ECO:0000255" key="1">
    <source>
        <dbReference type="HAMAP-Rule" id="MF_02119"/>
    </source>
</evidence>
<evidence type="ECO:0000255" key="2">
    <source>
        <dbReference type="PROSITE-ProRule" id="PRU01067"/>
    </source>
</evidence>
<evidence type="ECO:0000269" key="3">
    <source>
    </source>
</evidence>
<evidence type="ECO:0000269" key="4">
    <source>
    </source>
</evidence>
<evidence type="ECO:0000305" key="5">
    <source>
    </source>
</evidence>